<protein>
    <recommendedName>
        <fullName evidence="1">tRNA pseudouridine synthase A</fullName>
        <ecNumber evidence="1">5.4.99.12</ecNumber>
    </recommendedName>
    <alternativeName>
        <fullName evidence="1">tRNA pseudouridine(38-40) synthase</fullName>
    </alternativeName>
    <alternativeName>
        <fullName evidence="1">tRNA pseudouridylate synthase I</fullName>
    </alternativeName>
    <alternativeName>
        <fullName evidence="1">tRNA-uridine isomerase I</fullName>
    </alternativeName>
</protein>
<comment type="function">
    <text evidence="1">Formation of pseudouridine at positions 38, 39 and 40 in the anticodon stem and loop of transfer RNAs.</text>
</comment>
<comment type="catalytic activity">
    <reaction evidence="1">
        <text>uridine(38/39/40) in tRNA = pseudouridine(38/39/40) in tRNA</text>
        <dbReference type="Rhea" id="RHEA:22376"/>
        <dbReference type="Rhea" id="RHEA-COMP:10085"/>
        <dbReference type="Rhea" id="RHEA-COMP:10087"/>
        <dbReference type="ChEBI" id="CHEBI:65314"/>
        <dbReference type="ChEBI" id="CHEBI:65315"/>
        <dbReference type="EC" id="5.4.99.12"/>
    </reaction>
</comment>
<comment type="subunit">
    <text evidence="1">Homodimer.</text>
</comment>
<comment type="similarity">
    <text evidence="1">Belongs to the tRNA pseudouridine synthase TruA family.</text>
</comment>
<gene>
    <name evidence="1" type="primary">truA</name>
    <name type="ordered locus">BLA_0389</name>
</gene>
<accession>B8DW40</accession>
<feature type="chain" id="PRO_1000194529" description="tRNA pseudouridine synthase A">
    <location>
        <begin position="1"/>
        <end position="298"/>
    </location>
</feature>
<feature type="active site" description="Nucleophile" evidence="1">
    <location>
        <position position="56"/>
    </location>
</feature>
<feature type="binding site" evidence="1">
    <location>
        <position position="125"/>
    </location>
    <ligand>
        <name>substrate</name>
    </ligand>
</feature>
<organism>
    <name type="scientific">Bifidobacterium animalis subsp. lactis (strain AD011)</name>
    <dbReference type="NCBI Taxonomy" id="442563"/>
    <lineage>
        <taxon>Bacteria</taxon>
        <taxon>Bacillati</taxon>
        <taxon>Actinomycetota</taxon>
        <taxon>Actinomycetes</taxon>
        <taxon>Bifidobacteriales</taxon>
        <taxon>Bifidobacteriaceae</taxon>
        <taxon>Bifidobacterium</taxon>
    </lineage>
</organism>
<sequence>MTRLRIDLAYNGAAFHGWAAQPGCRTVQGTVEEALRRITRMPDAGSLRLTVAGRTDAGVHATHQVCHVDVPDQTLGQCVGHMNLTPVQALQTRLSRMMPDDIAIHGISVAPAGFDARFSALERTYVYRIADARVPWDPRLKDFAWRTDRELDIAQMNAAAALTLGLHDFGSFAIANPGGTTIREVKTAYWQRVPTRPLLGPGMGERYHTPAVESGLLCFTIVADAFARNMVRSLVGACVQVGMGKRDVDWFAGKMRVPLREGSTGPIAPQGLTLEHIAYPADDELAARAERIRAKRTL</sequence>
<name>TRUA_BIFA0</name>
<dbReference type="EC" id="5.4.99.12" evidence="1"/>
<dbReference type="EMBL" id="CP001213">
    <property type="protein sequence ID" value="ACL28691.1"/>
    <property type="molecule type" value="Genomic_DNA"/>
</dbReference>
<dbReference type="RefSeq" id="WP_012619707.1">
    <property type="nucleotide sequence ID" value="NC_011835.1"/>
</dbReference>
<dbReference type="SMR" id="B8DW40"/>
<dbReference type="STRING" id="442563.BLA_0389"/>
<dbReference type="GeneID" id="29695702"/>
<dbReference type="KEGG" id="bla:BLA_0389"/>
<dbReference type="HOGENOM" id="CLU_014673_0_2_11"/>
<dbReference type="Proteomes" id="UP000002456">
    <property type="component" value="Chromosome"/>
</dbReference>
<dbReference type="GO" id="GO:0003723">
    <property type="term" value="F:RNA binding"/>
    <property type="evidence" value="ECO:0007669"/>
    <property type="project" value="InterPro"/>
</dbReference>
<dbReference type="GO" id="GO:0160147">
    <property type="term" value="F:tRNA pseudouridine(38-40) synthase activity"/>
    <property type="evidence" value="ECO:0007669"/>
    <property type="project" value="UniProtKB-EC"/>
</dbReference>
<dbReference type="GO" id="GO:0031119">
    <property type="term" value="P:tRNA pseudouridine synthesis"/>
    <property type="evidence" value="ECO:0007669"/>
    <property type="project" value="UniProtKB-UniRule"/>
</dbReference>
<dbReference type="CDD" id="cd02570">
    <property type="entry name" value="PseudoU_synth_EcTruA"/>
    <property type="match status" value="1"/>
</dbReference>
<dbReference type="Gene3D" id="3.30.70.660">
    <property type="entry name" value="Pseudouridine synthase I, catalytic domain, C-terminal subdomain"/>
    <property type="match status" value="1"/>
</dbReference>
<dbReference type="Gene3D" id="3.30.70.580">
    <property type="entry name" value="Pseudouridine synthase I, catalytic domain, N-terminal subdomain"/>
    <property type="match status" value="1"/>
</dbReference>
<dbReference type="HAMAP" id="MF_00171">
    <property type="entry name" value="TruA"/>
    <property type="match status" value="1"/>
</dbReference>
<dbReference type="InterPro" id="IPR020103">
    <property type="entry name" value="PsdUridine_synth_cat_dom_sf"/>
</dbReference>
<dbReference type="InterPro" id="IPR001406">
    <property type="entry name" value="PsdUridine_synth_TruA"/>
</dbReference>
<dbReference type="InterPro" id="IPR020097">
    <property type="entry name" value="PsdUridine_synth_TruA_a/b_dom"/>
</dbReference>
<dbReference type="InterPro" id="IPR020095">
    <property type="entry name" value="PsdUridine_synth_TruA_C"/>
</dbReference>
<dbReference type="InterPro" id="IPR020094">
    <property type="entry name" value="TruA/RsuA/RluB/E/F_N"/>
</dbReference>
<dbReference type="NCBIfam" id="TIGR00071">
    <property type="entry name" value="hisT_truA"/>
    <property type="match status" value="1"/>
</dbReference>
<dbReference type="PANTHER" id="PTHR11142">
    <property type="entry name" value="PSEUDOURIDYLATE SYNTHASE"/>
    <property type="match status" value="1"/>
</dbReference>
<dbReference type="PANTHER" id="PTHR11142:SF0">
    <property type="entry name" value="TRNA PSEUDOURIDINE SYNTHASE-LIKE 1"/>
    <property type="match status" value="1"/>
</dbReference>
<dbReference type="Pfam" id="PF01416">
    <property type="entry name" value="PseudoU_synth_1"/>
    <property type="match status" value="1"/>
</dbReference>
<dbReference type="PIRSF" id="PIRSF001430">
    <property type="entry name" value="tRNA_psdUrid_synth"/>
    <property type="match status" value="1"/>
</dbReference>
<dbReference type="SUPFAM" id="SSF55120">
    <property type="entry name" value="Pseudouridine synthase"/>
    <property type="match status" value="1"/>
</dbReference>
<reference key="1">
    <citation type="journal article" date="2009" name="J. Bacteriol.">
        <title>Genome sequence of the probiotic bacterium Bifidobacterium animalis subsp. lactis AD011.</title>
        <authorList>
            <person name="Kim J.F."/>
            <person name="Jeong H."/>
            <person name="Yu D.S."/>
            <person name="Choi S.-H."/>
            <person name="Hur C.-G."/>
            <person name="Park M.-S."/>
            <person name="Yoon S.H."/>
            <person name="Kim D.-W."/>
            <person name="Ji G.E."/>
            <person name="Park H.-S."/>
            <person name="Oh T.K."/>
        </authorList>
    </citation>
    <scope>NUCLEOTIDE SEQUENCE [LARGE SCALE GENOMIC DNA]</scope>
    <source>
        <strain>AD011</strain>
    </source>
</reference>
<proteinExistence type="inferred from homology"/>
<keyword id="KW-0413">Isomerase</keyword>
<keyword id="KW-1185">Reference proteome</keyword>
<keyword id="KW-0819">tRNA processing</keyword>
<evidence type="ECO:0000255" key="1">
    <source>
        <dbReference type="HAMAP-Rule" id="MF_00171"/>
    </source>
</evidence>